<feature type="chain" id="PRO_1000131083" description="Putative pre-16S rRNA nuclease">
    <location>
        <begin position="1"/>
        <end position="140"/>
    </location>
</feature>
<sequence length="140" mass="15737">MNRIMGIDYGLKRIGIAITDFLRITASPFDTVKNVSLKKNALKILEIAKNRDVSIIVLGLPLNMNGTEGGMAETVRKFIEKIKFLSDIEVTTVDERLTTVQAERMLIEEADISREKRKGIKDKVVAALILQTYLDIQSDE</sequence>
<comment type="function">
    <text evidence="1">Could be a nuclease involved in processing of the 5'-end of pre-16S rRNA.</text>
</comment>
<comment type="subcellular location">
    <subcellularLocation>
        <location evidence="1">Cytoplasm</location>
    </subcellularLocation>
</comment>
<comment type="similarity">
    <text evidence="1">Belongs to the YqgF nuclease family.</text>
</comment>
<keyword id="KW-0963">Cytoplasm</keyword>
<keyword id="KW-0378">Hydrolase</keyword>
<keyword id="KW-0540">Nuclease</keyword>
<keyword id="KW-0690">Ribosome biogenesis</keyword>
<reference key="1">
    <citation type="journal article" date="2008" name="Proc. Natl. Acad. Sci. U.S.A.">
        <title>Complete genome of the uncultured termite group 1 bacteria in a single host protist cell.</title>
        <authorList>
            <person name="Hongoh Y."/>
            <person name="Sharma V.K."/>
            <person name="Prakash T."/>
            <person name="Noda S."/>
            <person name="Taylor T.D."/>
            <person name="Kudo T."/>
            <person name="Sakaki Y."/>
            <person name="Toyoda A."/>
            <person name="Hattori M."/>
            <person name="Ohkuma M."/>
        </authorList>
    </citation>
    <scope>NUCLEOTIDE SEQUENCE [LARGE SCALE GENOMIC DNA]</scope>
</reference>
<name>YQGF_ENDTX</name>
<dbReference type="EC" id="3.1.-.-" evidence="1"/>
<dbReference type="EMBL" id="AP009510">
    <property type="protein sequence ID" value="BAG14004.1"/>
    <property type="molecule type" value="Genomic_DNA"/>
</dbReference>
<dbReference type="RefSeq" id="WP_015423529.1">
    <property type="nucleotide sequence ID" value="NC_020419.1"/>
</dbReference>
<dbReference type="SMR" id="B1H0H2"/>
<dbReference type="STRING" id="471821.TGRD_521"/>
<dbReference type="KEGG" id="eti:RSTT_488"/>
<dbReference type="KEGG" id="rsd:TGRD_521"/>
<dbReference type="PATRIC" id="fig|471821.5.peg.855"/>
<dbReference type="HOGENOM" id="CLU_098240_2_0_0"/>
<dbReference type="OrthoDB" id="9796140at2"/>
<dbReference type="Proteomes" id="UP000001691">
    <property type="component" value="Chromosome"/>
</dbReference>
<dbReference type="GO" id="GO:0005829">
    <property type="term" value="C:cytosol"/>
    <property type="evidence" value="ECO:0007669"/>
    <property type="project" value="TreeGrafter"/>
</dbReference>
<dbReference type="GO" id="GO:0004518">
    <property type="term" value="F:nuclease activity"/>
    <property type="evidence" value="ECO:0007669"/>
    <property type="project" value="UniProtKB-KW"/>
</dbReference>
<dbReference type="GO" id="GO:0000967">
    <property type="term" value="P:rRNA 5'-end processing"/>
    <property type="evidence" value="ECO:0007669"/>
    <property type="project" value="UniProtKB-UniRule"/>
</dbReference>
<dbReference type="CDD" id="cd16964">
    <property type="entry name" value="YqgF"/>
    <property type="match status" value="1"/>
</dbReference>
<dbReference type="Gene3D" id="3.30.420.140">
    <property type="entry name" value="YqgF/RNase H-like domain"/>
    <property type="match status" value="1"/>
</dbReference>
<dbReference type="HAMAP" id="MF_00651">
    <property type="entry name" value="Nuclease_YqgF"/>
    <property type="match status" value="1"/>
</dbReference>
<dbReference type="InterPro" id="IPR012337">
    <property type="entry name" value="RNaseH-like_sf"/>
</dbReference>
<dbReference type="InterPro" id="IPR005227">
    <property type="entry name" value="YqgF"/>
</dbReference>
<dbReference type="InterPro" id="IPR006641">
    <property type="entry name" value="YqgF/RNaseH-like_dom"/>
</dbReference>
<dbReference type="InterPro" id="IPR037027">
    <property type="entry name" value="YqgF/RNaseH-like_dom_sf"/>
</dbReference>
<dbReference type="NCBIfam" id="TIGR00250">
    <property type="entry name" value="RNAse_H_YqgF"/>
    <property type="match status" value="1"/>
</dbReference>
<dbReference type="PANTHER" id="PTHR33317">
    <property type="entry name" value="POLYNUCLEOTIDYL TRANSFERASE, RIBONUCLEASE H-LIKE SUPERFAMILY PROTEIN"/>
    <property type="match status" value="1"/>
</dbReference>
<dbReference type="PANTHER" id="PTHR33317:SF4">
    <property type="entry name" value="POLYNUCLEOTIDYL TRANSFERASE, RIBONUCLEASE H-LIKE SUPERFAMILY PROTEIN"/>
    <property type="match status" value="1"/>
</dbReference>
<dbReference type="Pfam" id="PF03652">
    <property type="entry name" value="RuvX"/>
    <property type="match status" value="1"/>
</dbReference>
<dbReference type="SMART" id="SM00732">
    <property type="entry name" value="YqgFc"/>
    <property type="match status" value="1"/>
</dbReference>
<dbReference type="SUPFAM" id="SSF53098">
    <property type="entry name" value="Ribonuclease H-like"/>
    <property type="match status" value="1"/>
</dbReference>
<organism>
    <name type="scientific">Endomicrobium trichonymphae</name>
    <dbReference type="NCBI Taxonomy" id="1408204"/>
    <lineage>
        <taxon>Bacteria</taxon>
        <taxon>Pseudomonadati</taxon>
        <taxon>Elusimicrobiota</taxon>
        <taxon>Endomicrobiia</taxon>
        <taxon>Endomicrobiales</taxon>
        <taxon>Endomicrobiaceae</taxon>
        <taxon>Candidatus Endomicrobiellum</taxon>
    </lineage>
</organism>
<accession>B1H0H2</accession>
<proteinExistence type="inferred from homology"/>
<protein>
    <recommendedName>
        <fullName evidence="1">Putative pre-16S rRNA nuclease</fullName>
        <ecNumber evidence="1">3.1.-.-</ecNumber>
    </recommendedName>
</protein>
<evidence type="ECO:0000255" key="1">
    <source>
        <dbReference type="HAMAP-Rule" id="MF_00651"/>
    </source>
</evidence>
<gene>
    <name type="ordered locus">TGRD_521</name>
</gene>